<dbReference type="EC" id="2.1.1.192" evidence="1"/>
<dbReference type="EMBL" id="BA000034">
    <property type="protein sequence ID" value="BAC63773.1"/>
    <property type="molecule type" value="Genomic_DNA"/>
</dbReference>
<dbReference type="RefSeq" id="WP_002992788.1">
    <property type="nucleotide sequence ID" value="NC_004606.1"/>
</dbReference>
<dbReference type="SMR" id="P0DF11"/>
<dbReference type="KEGG" id="sps:SPs0678"/>
<dbReference type="HOGENOM" id="CLU_029101_0_1_9"/>
<dbReference type="GO" id="GO:0005737">
    <property type="term" value="C:cytoplasm"/>
    <property type="evidence" value="ECO:0007669"/>
    <property type="project" value="UniProtKB-SubCell"/>
</dbReference>
<dbReference type="GO" id="GO:0051539">
    <property type="term" value="F:4 iron, 4 sulfur cluster binding"/>
    <property type="evidence" value="ECO:0007669"/>
    <property type="project" value="UniProtKB-UniRule"/>
</dbReference>
<dbReference type="GO" id="GO:0046872">
    <property type="term" value="F:metal ion binding"/>
    <property type="evidence" value="ECO:0007669"/>
    <property type="project" value="UniProtKB-KW"/>
</dbReference>
<dbReference type="GO" id="GO:0070040">
    <property type="term" value="F:rRNA (adenine(2503)-C2-)-methyltransferase activity"/>
    <property type="evidence" value="ECO:0007669"/>
    <property type="project" value="UniProtKB-UniRule"/>
</dbReference>
<dbReference type="GO" id="GO:0019843">
    <property type="term" value="F:rRNA binding"/>
    <property type="evidence" value="ECO:0007669"/>
    <property type="project" value="UniProtKB-UniRule"/>
</dbReference>
<dbReference type="GO" id="GO:0002935">
    <property type="term" value="F:tRNA (adenine(37)-C2)-methyltransferase activity"/>
    <property type="evidence" value="ECO:0007669"/>
    <property type="project" value="UniProtKB-UniRule"/>
</dbReference>
<dbReference type="GO" id="GO:0000049">
    <property type="term" value="F:tRNA binding"/>
    <property type="evidence" value="ECO:0007669"/>
    <property type="project" value="UniProtKB-UniRule"/>
</dbReference>
<dbReference type="GO" id="GO:0070475">
    <property type="term" value="P:rRNA base methylation"/>
    <property type="evidence" value="ECO:0007669"/>
    <property type="project" value="UniProtKB-UniRule"/>
</dbReference>
<dbReference type="GO" id="GO:0030488">
    <property type="term" value="P:tRNA methylation"/>
    <property type="evidence" value="ECO:0007669"/>
    <property type="project" value="UniProtKB-UniRule"/>
</dbReference>
<dbReference type="CDD" id="cd01335">
    <property type="entry name" value="Radical_SAM"/>
    <property type="match status" value="1"/>
</dbReference>
<dbReference type="FunFam" id="3.20.20.70:FF:000014">
    <property type="entry name" value="Probable dual-specificity RNA methyltransferase RlmN"/>
    <property type="match status" value="1"/>
</dbReference>
<dbReference type="Gene3D" id="1.10.150.530">
    <property type="match status" value="1"/>
</dbReference>
<dbReference type="Gene3D" id="3.20.20.70">
    <property type="entry name" value="Aldolase class I"/>
    <property type="match status" value="1"/>
</dbReference>
<dbReference type="HAMAP" id="MF_01849">
    <property type="entry name" value="RNA_methyltr_RlmN"/>
    <property type="match status" value="1"/>
</dbReference>
<dbReference type="InterPro" id="IPR013785">
    <property type="entry name" value="Aldolase_TIM"/>
</dbReference>
<dbReference type="InterPro" id="IPR040072">
    <property type="entry name" value="Methyltransferase_A"/>
</dbReference>
<dbReference type="InterPro" id="IPR048641">
    <property type="entry name" value="RlmN_N"/>
</dbReference>
<dbReference type="InterPro" id="IPR027492">
    <property type="entry name" value="RNA_MTrfase_RlmN"/>
</dbReference>
<dbReference type="InterPro" id="IPR004383">
    <property type="entry name" value="rRNA_lsu_MTrfase_RlmN/Cfr"/>
</dbReference>
<dbReference type="InterPro" id="IPR007197">
    <property type="entry name" value="rSAM"/>
</dbReference>
<dbReference type="NCBIfam" id="TIGR00048">
    <property type="entry name" value="rRNA_mod_RlmN"/>
    <property type="match status" value="1"/>
</dbReference>
<dbReference type="PANTHER" id="PTHR30544">
    <property type="entry name" value="23S RRNA METHYLTRANSFERASE"/>
    <property type="match status" value="1"/>
</dbReference>
<dbReference type="PANTHER" id="PTHR30544:SF5">
    <property type="entry name" value="RADICAL SAM CORE DOMAIN-CONTAINING PROTEIN"/>
    <property type="match status" value="1"/>
</dbReference>
<dbReference type="Pfam" id="PF04055">
    <property type="entry name" value="Radical_SAM"/>
    <property type="match status" value="1"/>
</dbReference>
<dbReference type="Pfam" id="PF21016">
    <property type="entry name" value="RlmN_N"/>
    <property type="match status" value="1"/>
</dbReference>
<dbReference type="PIRSF" id="PIRSF006004">
    <property type="entry name" value="CHP00048"/>
    <property type="match status" value="1"/>
</dbReference>
<dbReference type="SFLD" id="SFLDF00275">
    <property type="entry name" value="adenosine_C2_methyltransferase"/>
    <property type="match status" value="1"/>
</dbReference>
<dbReference type="SFLD" id="SFLDS00029">
    <property type="entry name" value="Radical_SAM"/>
    <property type="match status" value="1"/>
</dbReference>
<dbReference type="SUPFAM" id="SSF102114">
    <property type="entry name" value="Radical SAM enzymes"/>
    <property type="match status" value="1"/>
</dbReference>
<dbReference type="PROSITE" id="PS51918">
    <property type="entry name" value="RADICAL_SAM"/>
    <property type="match status" value="1"/>
</dbReference>
<organism>
    <name type="scientific">Streptococcus pyogenes serotype M3 (strain SSI-1)</name>
    <dbReference type="NCBI Taxonomy" id="193567"/>
    <lineage>
        <taxon>Bacteria</taxon>
        <taxon>Bacillati</taxon>
        <taxon>Bacillota</taxon>
        <taxon>Bacilli</taxon>
        <taxon>Lactobacillales</taxon>
        <taxon>Streptococcaceae</taxon>
        <taxon>Streptococcus</taxon>
    </lineage>
</organism>
<proteinExistence type="inferred from homology"/>
<protein>
    <recommendedName>
        <fullName evidence="1">Probable dual-specificity RNA methyltransferase RlmN</fullName>
        <ecNumber evidence="1">2.1.1.192</ecNumber>
    </recommendedName>
    <alternativeName>
        <fullName evidence="1">23S rRNA (adenine(2503)-C(2))-methyltransferase</fullName>
    </alternativeName>
    <alternativeName>
        <fullName evidence="1">23S rRNA m2A2503 methyltransferase</fullName>
    </alternativeName>
    <alternativeName>
        <fullName evidence="1">Ribosomal RNA large subunit methyltransferase N</fullName>
    </alternativeName>
    <alternativeName>
        <fullName evidence="1">tRNA (adenine(37)-C(2))-methyltransferase</fullName>
    </alternativeName>
    <alternativeName>
        <fullName evidence="1">tRNA m2A37 methyltransferase</fullName>
    </alternativeName>
</protein>
<accession>P0DF11</accession>
<accession>Q79XR4</accession>
<accession>Q7CEX7</accession>
<keyword id="KW-0004">4Fe-4S</keyword>
<keyword id="KW-0963">Cytoplasm</keyword>
<keyword id="KW-1015">Disulfide bond</keyword>
<keyword id="KW-0408">Iron</keyword>
<keyword id="KW-0411">Iron-sulfur</keyword>
<keyword id="KW-0479">Metal-binding</keyword>
<keyword id="KW-0489">Methyltransferase</keyword>
<keyword id="KW-0698">rRNA processing</keyword>
<keyword id="KW-0949">S-adenosyl-L-methionine</keyword>
<keyword id="KW-0808">Transferase</keyword>
<keyword id="KW-0819">tRNA processing</keyword>
<feature type="chain" id="PRO_0000411545" description="Probable dual-specificity RNA methyltransferase RlmN">
    <location>
        <begin position="1"/>
        <end position="359"/>
    </location>
</feature>
<feature type="domain" description="Radical SAM core" evidence="2">
    <location>
        <begin position="97"/>
        <end position="329"/>
    </location>
</feature>
<feature type="active site" description="Proton acceptor" evidence="1">
    <location>
        <position position="91"/>
    </location>
</feature>
<feature type="active site" description="S-methylcysteine intermediate" evidence="1">
    <location>
        <position position="340"/>
    </location>
</feature>
<feature type="binding site" evidence="1">
    <location>
        <position position="111"/>
    </location>
    <ligand>
        <name>[4Fe-4S] cluster</name>
        <dbReference type="ChEBI" id="CHEBI:49883"/>
        <note>4Fe-4S-S-AdoMet</note>
    </ligand>
</feature>
<feature type="binding site" evidence="1">
    <location>
        <position position="115"/>
    </location>
    <ligand>
        <name>[4Fe-4S] cluster</name>
        <dbReference type="ChEBI" id="CHEBI:49883"/>
        <note>4Fe-4S-S-AdoMet</note>
    </ligand>
</feature>
<feature type="binding site" evidence="1">
    <location>
        <position position="118"/>
    </location>
    <ligand>
        <name>[4Fe-4S] cluster</name>
        <dbReference type="ChEBI" id="CHEBI:49883"/>
        <note>4Fe-4S-S-AdoMet</note>
    </ligand>
</feature>
<feature type="binding site" evidence="1">
    <location>
        <begin position="163"/>
        <end position="164"/>
    </location>
    <ligand>
        <name>S-adenosyl-L-methionine</name>
        <dbReference type="ChEBI" id="CHEBI:59789"/>
    </ligand>
</feature>
<feature type="binding site" evidence="1">
    <location>
        <position position="195"/>
    </location>
    <ligand>
        <name>S-adenosyl-L-methionine</name>
        <dbReference type="ChEBI" id="CHEBI:59789"/>
    </ligand>
</feature>
<feature type="binding site" evidence="1">
    <location>
        <begin position="218"/>
        <end position="220"/>
    </location>
    <ligand>
        <name>S-adenosyl-L-methionine</name>
        <dbReference type="ChEBI" id="CHEBI:59789"/>
    </ligand>
</feature>
<feature type="binding site" evidence="1">
    <location>
        <position position="296"/>
    </location>
    <ligand>
        <name>S-adenosyl-L-methionine</name>
        <dbReference type="ChEBI" id="CHEBI:59789"/>
    </ligand>
</feature>
<feature type="disulfide bond" description="(transient)" evidence="1">
    <location>
        <begin position="104"/>
        <end position="340"/>
    </location>
</feature>
<gene>
    <name evidence="1" type="primary">rlmN</name>
    <name type="ordered locus">SPs0678</name>
</gene>
<reference key="1">
    <citation type="journal article" date="2003" name="Genome Res.">
        <title>Genome sequence of an M3 strain of Streptococcus pyogenes reveals a large-scale genomic rearrangement in invasive strains and new insights into phage evolution.</title>
        <authorList>
            <person name="Nakagawa I."/>
            <person name="Kurokawa K."/>
            <person name="Yamashita A."/>
            <person name="Nakata M."/>
            <person name="Tomiyasu Y."/>
            <person name="Okahashi N."/>
            <person name="Kawabata S."/>
            <person name="Yamazaki K."/>
            <person name="Shiba T."/>
            <person name="Yasunaga T."/>
            <person name="Hayashi H."/>
            <person name="Hattori M."/>
            <person name="Hamada S."/>
        </authorList>
    </citation>
    <scope>NUCLEOTIDE SEQUENCE [LARGE SCALE GENOMIC DNA]</scope>
    <source>
        <strain>SSI-1</strain>
    </source>
</reference>
<comment type="function">
    <text evidence="1">Specifically methylates position 2 of adenine 2503 in 23S rRNA and position 2 of adenine 37 in tRNAs.</text>
</comment>
<comment type="catalytic activity">
    <reaction evidence="1">
        <text>adenosine(2503) in 23S rRNA + 2 reduced [2Fe-2S]-[ferredoxin] + 2 S-adenosyl-L-methionine = 2-methyladenosine(2503) in 23S rRNA + 5'-deoxyadenosine + L-methionine + 2 oxidized [2Fe-2S]-[ferredoxin] + S-adenosyl-L-homocysteine</text>
        <dbReference type="Rhea" id="RHEA:42916"/>
        <dbReference type="Rhea" id="RHEA-COMP:10000"/>
        <dbReference type="Rhea" id="RHEA-COMP:10001"/>
        <dbReference type="Rhea" id="RHEA-COMP:10152"/>
        <dbReference type="Rhea" id="RHEA-COMP:10282"/>
        <dbReference type="ChEBI" id="CHEBI:17319"/>
        <dbReference type="ChEBI" id="CHEBI:33737"/>
        <dbReference type="ChEBI" id="CHEBI:33738"/>
        <dbReference type="ChEBI" id="CHEBI:57844"/>
        <dbReference type="ChEBI" id="CHEBI:57856"/>
        <dbReference type="ChEBI" id="CHEBI:59789"/>
        <dbReference type="ChEBI" id="CHEBI:74411"/>
        <dbReference type="ChEBI" id="CHEBI:74497"/>
        <dbReference type="EC" id="2.1.1.192"/>
    </reaction>
</comment>
<comment type="catalytic activity">
    <reaction evidence="1">
        <text>adenosine(37) in tRNA + 2 reduced [2Fe-2S]-[ferredoxin] + 2 S-adenosyl-L-methionine = 2-methyladenosine(37) in tRNA + 5'-deoxyadenosine + L-methionine + 2 oxidized [2Fe-2S]-[ferredoxin] + S-adenosyl-L-homocysteine</text>
        <dbReference type="Rhea" id="RHEA:43332"/>
        <dbReference type="Rhea" id="RHEA-COMP:10000"/>
        <dbReference type="Rhea" id="RHEA-COMP:10001"/>
        <dbReference type="Rhea" id="RHEA-COMP:10162"/>
        <dbReference type="Rhea" id="RHEA-COMP:10485"/>
        <dbReference type="ChEBI" id="CHEBI:17319"/>
        <dbReference type="ChEBI" id="CHEBI:33737"/>
        <dbReference type="ChEBI" id="CHEBI:33738"/>
        <dbReference type="ChEBI" id="CHEBI:57844"/>
        <dbReference type="ChEBI" id="CHEBI:57856"/>
        <dbReference type="ChEBI" id="CHEBI:59789"/>
        <dbReference type="ChEBI" id="CHEBI:74411"/>
        <dbReference type="ChEBI" id="CHEBI:74497"/>
        <dbReference type="EC" id="2.1.1.192"/>
    </reaction>
</comment>
<comment type="cofactor">
    <cofactor evidence="1">
        <name>[4Fe-4S] cluster</name>
        <dbReference type="ChEBI" id="CHEBI:49883"/>
    </cofactor>
    <text evidence="1">Binds 1 [4Fe-4S] cluster. The cluster is coordinated with 3 cysteines and an exchangeable S-adenosyl-L-methionine.</text>
</comment>
<comment type="subcellular location">
    <subcellularLocation>
        <location evidence="1">Cytoplasm</location>
    </subcellularLocation>
</comment>
<comment type="miscellaneous">
    <text evidence="1">Reaction proceeds by a ping-pong mechanism involving intermediate methylation of a conserved cysteine residue.</text>
</comment>
<comment type="similarity">
    <text evidence="1">Belongs to the radical SAM superfamily. RlmN family.</text>
</comment>
<name>RLMN_STRPQ</name>
<sequence length="359" mass="41053">MKPSIYSLTRDELIAWAVERGQKQFRATQIWDWLYKKRVQSFEEMTNISKDFVSILNDSFCVNPLKQRVVQESADGTVKYLFELPDGMLIETVLMRQHYGHSVCVTTQVGCNIGCTFCASGLIKKQRDLNSGEITAQIMLVQKYFDDRKQGERVSHVVVMGIGEPFDNYKNVMCFLRVINDDNGLAIGARHITVSTSGLAHKIRDFANEGVQVNLAVSLHAPNNDLRSSIMRVNRSFPLEKLFSAIEYYIEKTNRRVTFEYIMLNEVNDSIKQAQELADLTKTIRKLSYVNLIPYNPVSEHDQYSRSPKERVLAFYDVLKKNGVNCVVRQEHGTDIDAACGQLRSKTMKKDREKVTATK</sequence>
<evidence type="ECO:0000255" key="1">
    <source>
        <dbReference type="HAMAP-Rule" id="MF_01849"/>
    </source>
</evidence>
<evidence type="ECO:0000255" key="2">
    <source>
        <dbReference type="PROSITE-ProRule" id="PRU01266"/>
    </source>
</evidence>